<feature type="chain" id="PRO_0000433207" description="Anti-CRISPR protein 30">
    <location>
        <begin position="1"/>
        <end position="90"/>
    </location>
</feature>
<feature type="helix" evidence="6">
    <location>
        <begin position="1"/>
        <end position="5"/>
    </location>
</feature>
<feature type="helix" evidence="6">
    <location>
        <begin position="9"/>
        <end position="19"/>
    </location>
</feature>
<feature type="strand" evidence="6">
    <location>
        <begin position="21"/>
        <end position="26"/>
    </location>
</feature>
<feature type="strand" evidence="6">
    <location>
        <begin position="32"/>
        <end position="36"/>
    </location>
</feature>
<feature type="strand" evidence="6">
    <location>
        <begin position="40"/>
        <end position="47"/>
    </location>
</feature>
<feature type="strand" evidence="6">
    <location>
        <begin position="50"/>
        <end position="53"/>
    </location>
</feature>
<feature type="helix" evidence="6">
    <location>
        <begin position="58"/>
        <end position="67"/>
    </location>
</feature>
<feature type="helix" evidence="6">
    <location>
        <begin position="70"/>
        <end position="86"/>
    </location>
</feature>
<dbReference type="EMBL" id="AY394005">
    <property type="protein sequence ID" value="AAQ94468.1"/>
    <property type="molecule type" value="Genomic_DNA"/>
</dbReference>
<dbReference type="RefSeq" id="NP_938237.1">
    <property type="nucleotide sequence ID" value="NC_005178.1"/>
</dbReference>
<dbReference type="PDB" id="5UZ9">
    <property type="method" value="EM"/>
    <property type="resolution" value="3.40 A"/>
    <property type="chains" value="K=2-90"/>
</dbReference>
<dbReference type="PDB" id="5YHR">
    <property type="method" value="X-ray"/>
    <property type="resolution" value="1.34 A"/>
    <property type="chains" value="A/B=1-90"/>
</dbReference>
<dbReference type="PDB" id="6B47">
    <property type="method" value="EM"/>
    <property type="resolution" value="3.20 A"/>
    <property type="chains" value="K=1-90"/>
</dbReference>
<dbReference type="PDB" id="8DFS">
    <property type="method" value="EM"/>
    <property type="resolution" value="3.00 A"/>
    <property type="chains" value="M=1-90"/>
</dbReference>
<dbReference type="PDBsum" id="5UZ9"/>
<dbReference type="PDBsum" id="5YHR"/>
<dbReference type="PDBsum" id="6B47"/>
<dbReference type="PDBsum" id="8DFS"/>
<dbReference type="EMDB" id="EMD-27412"/>
<dbReference type="EMDB" id="EMD-7051"/>
<dbReference type="EMDB" id="EMD-8624"/>
<dbReference type="SMR" id="Q6TM72"/>
<dbReference type="DIP" id="DIP-61768N"/>
<dbReference type="IntAct" id="Q6TM72">
    <property type="interactions" value="5"/>
</dbReference>
<dbReference type="GeneID" id="2648149"/>
<dbReference type="KEGG" id="vg:2648149"/>
<dbReference type="Proteomes" id="UP000000875">
    <property type="component" value="Genome"/>
</dbReference>
<dbReference type="GO" id="GO:0039504">
    <property type="term" value="P:symbiont-mediated suppression of host adaptive immune response"/>
    <property type="evidence" value="ECO:0007669"/>
    <property type="project" value="UniProtKB-KW"/>
</dbReference>
<dbReference type="GO" id="GO:0098672">
    <property type="term" value="P:symbiont-mediated suppression of host CRISPR-cas system"/>
    <property type="evidence" value="ECO:0007669"/>
    <property type="project" value="UniProtKB-KW"/>
</dbReference>
<dbReference type="CDD" id="cd22280">
    <property type="entry name" value="AcrIF2"/>
    <property type="match status" value="1"/>
</dbReference>
<comment type="function">
    <text evidence="1">Allows the phage to evade the CRISPR/Cas system type I-F.</text>
</comment>
<evidence type="ECO:0000269" key="1">
    <source>
    </source>
</evidence>
<evidence type="ECO:0000303" key="2">
    <source>
    </source>
</evidence>
<evidence type="ECO:0000305" key="3"/>
<evidence type="ECO:0000312" key="4">
    <source>
        <dbReference type="EMBL" id="AAQ94468.1"/>
    </source>
</evidence>
<evidence type="ECO:0000312" key="5">
    <source>
        <dbReference type="Proteomes" id="UP000000875"/>
    </source>
</evidence>
<evidence type="ECO:0007829" key="6">
    <source>
        <dbReference type="PDB" id="5YHR"/>
    </source>
</evidence>
<gene>
    <name evidence="4" type="primary">orf30</name>
</gene>
<sequence>MIAQQHKDTVAACEAAEAIAIAKDQVWDGEGYTKYTFDDNSVLIQSGTTQYAMDADDADSIKGYADWLDDEARSAEASEIERLLESVEEE</sequence>
<proteinExistence type="evidence at protein level"/>
<accession>Q6TM72</accession>
<protein>
    <recommendedName>
        <fullName evidence="2">Anti-CRISPR protein 30</fullName>
    </recommendedName>
    <alternativeName>
        <fullName evidence="3">Gene product 30</fullName>
        <shortName>gp30</shortName>
    </alternativeName>
</protein>
<reference key="1">
    <citation type="journal article" date="2004" name="J. Bacteriol.">
        <title>Complete sequence and evolutionary genomic analysis of the Pseudomonas aeruginosa transposable bacteriophage D3112.</title>
        <authorList>
            <person name="Wang P.W."/>
            <person name="Chu L."/>
            <person name="Guttman D.S."/>
        </authorList>
    </citation>
    <scope>NUCLEOTIDE SEQUENCE [GENOMIC DNA]</scope>
</reference>
<reference key="2">
    <citation type="journal article" date="2013" name="Nature">
        <title>Bacteriophage genes that inactivate the CRISPR/Cas bacterial immune system.</title>
        <authorList>
            <person name="Bondy-Denomy J."/>
            <person name="Pawluk A."/>
            <person name="Maxwell K.L."/>
            <person name="Davidson A.R."/>
        </authorList>
    </citation>
    <scope>FUNCTION</scope>
</reference>
<organism evidence="5">
    <name type="scientific">Pseudomonas phage D3112</name>
    <name type="common">Bacteriophage D3112</name>
    <dbReference type="NCBI Taxonomy" id="2907964"/>
    <lineage>
        <taxon>Viruses</taxon>
        <taxon>Duplodnaviria</taxon>
        <taxon>Heunggongvirae</taxon>
        <taxon>Uroviricota</taxon>
        <taxon>Caudoviricetes</taxon>
        <taxon>Casadabanvirus</taxon>
        <taxon>Casadabanvirus D3112</taxon>
    </lineage>
</organism>
<organismHost>
    <name type="scientific">Pseudomonas aeruginosa</name>
    <dbReference type="NCBI Taxonomy" id="287"/>
</organismHost>
<name>ACR30_BPD31</name>
<keyword id="KW-0002">3D-structure</keyword>
<keyword id="KW-1257">CRISPR-cas system evasion by virus</keyword>
<keyword id="KW-0945">Host-virus interaction</keyword>
<keyword id="KW-1080">Inhibition of host adaptive immune response by virus</keyword>
<keyword id="KW-1185">Reference proteome</keyword>
<keyword id="KW-0899">Viral immunoevasion</keyword>